<reference key="1">
    <citation type="journal article" date="2004" name="Proc. Natl. Acad. Sci. U.S.A.">
        <title>Complete genomes of two clinical Staphylococcus aureus strains: evidence for the rapid evolution of virulence and drug resistance.</title>
        <authorList>
            <person name="Holden M.T.G."/>
            <person name="Feil E.J."/>
            <person name="Lindsay J.A."/>
            <person name="Peacock S.J."/>
            <person name="Day N.P.J."/>
            <person name="Enright M.C."/>
            <person name="Foster T.J."/>
            <person name="Moore C.E."/>
            <person name="Hurst L."/>
            <person name="Atkin R."/>
            <person name="Barron A."/>
            <person name="Bason N."/>
            <person name="Bentley S.D."/>
            <person name="Chillingworth C."/>
            <person name="Chillingworth T."/>
            <person name="Churcher C."/>
            <person name="Clark L."/>
            <person name="Corton C."/>
            <person name="Cronin A."/>
            <person name="Doggett J."/>
            <person name="Dowd L."/>
            <person name="Feltwell T."/>
            <person name="Hance Z."/>
            <person name="Harris B."/>
            <person name="Hauser H."/>
            <person name="Holroyd S."/>
            <person name="Jagels K."/>
            <person name="James K.D."/>
            <person name="Lennard N."/>
            <person name="Line A."/>
            <person name="Mayes R."/>
            <person name="Moule S."/>
            <person name="Mungall K."/>
            <person name="Ormond D."/>
            <person name="Quail M.A."/>
            <person name="Rabbinowitsch E."/>
            <person name="Rutherford K.M."/>
            <person name="Sanders M."/>
            <person name="Sharp S."/>
            <person name="Simmonds M."/>
            <person name="Stevens K."/>
            <person name="Whitehead S."/>
            <person name="Barrell B.G."/>
            <person name="Spratt B.G."/>
            <person name="Parkhill J."/>
        </authorList>
    </citation>
    <scope>NUCLEOTIDE SEQUENCE [LARGE SCALE GENOMIC DNA]</scope>
    <source>
        <strain>MRSA252</strain>
    </source>
</reference>
<protein>
    <recommendedName>
        <fullName>UPF0337 protein SAR0874</fullName>
    </recommendedName>
</protein>
<evidence type="ECO:0000256" key="1">
    <source>
        <dbReference type="SAM" id="MobiDB-lite"/>
    </source>
</evidence>
<evidence type="ECO:0000305" key="2"/>
<organism>
    <name type="scientific">Staphylococcus aureus (strain MRSA252)</name>
    <dbReference type="NCBI Taxonomy" id="282458"/>
    <lineage>
        <taxon>Bacteria</taxon>
        <taxon>Bacillati</taxon>
        <taxon>Bacillota</taxon>
        <taxon>Bacilli</taxon>
        <taxon>Bacillales</taxon>
        <taxon>Staphylococcaceae</taxon>
        <taxon>Staphylococcus</taxon>
    </lineage>
</organism>
<accession>Q6GIH6</accession>
<dbReference type="EMBL" id="BX571856">
    <property type="protein sequence ID" value="CAG39880.1"/>
    <property type="molecule type" value="Genomic_DNA"/>
</dbReference>
<dbReference type="RefSeq" id="WP_000752917.1">
    <property type="nucleotide sequence ID" value="NC_002952.2"/>
</dbReference>
<dbReference type="SMR" id="Q6GIH6"/>
<dbReference type="KEGG" id="sar:SAR0874"/>
<dbReference type="HOGENOM" id="CLU_135567_0_3_9"/>
<dbReference type="Proteomes" id="UP000000596">
    <property type="component" value="Chromosome"/>
</dbReference>
<dbReference type="Gene3D" id="1.10.1470.10">
    <property type="entry name" value="YjbJ"/>
    <property type="match status" value="1"/>
</dbReference>
<dbReference type="InterPro" id="IPR008462">
    <property type="entry name" value="CsbD"/>
</dbReference>
<dbReference type="InterPro" id="IPR050423">
    <property type="entry name" value="UPF0337_stress_rsp"/>
</dbReference>
<dbReference type="InterPro" id="IPR036629">
    <property type="entry name" value="YjbJ_sf"/>
</dbReference>
<dbReference type="PANTHER" id="PTHR34977">
    <property type="entry name" value="UPF0337 PROTEIN YJBJ"/>
    <property type="match status" value="1"/>
</dbReference>
<dbReference type="PANTHER" id="PTHR34977:SF1">
    <property type="entry name" value="UPF0337 PROTEIN YJBJ"/>
    <property type="match status" value="1"/>
</dbReference>
<dbReference type="Pfam" id="PF05532">
    <property type="entry name" value="CsbD"/>
    <property type="match status" value="1"/>
</dbReference>
<dbReference type="SUPFAM" id="SSF69047">
    <property type="entry name" value="Hypothetical protein YjbJ"/>
    <property type="match status" value="1"/>
</dbReference>
<sequence>MADESKFEQAKGNVKETVGNVTDNKNLENEGKEDKASGKAKEFVENAKEKATDFIDKVKGNKGE</sequence>
<feature type="chain" id="PRO_0000272673" description="UPF0337 protein SAR0874">
    <location>
        <begin position="1"/>
        <end position="64"/>
    </location>
</feature>
<feature type="region of interest" description="Disordered" evidence="1">
    <location>
        <begin position="1"/>
        <end position="40"/>
    </location>
</feature>
<feature type="compositionally biased region" description="Basic and acidic residues" evidence="1">
    <location>
        <begin position="25"/>
        <end position="40"/>
    </location>
</feature>
<comment type="similarity">
    <text evidence="2">Belongs to the UPF0337 (CsbD) family.</text>
</comment>
<proteinExistence type="inferred from homology"/>
<name>Y874_STAAR</name>
<gene>
    <name type="ordered locus">SAR0874</name>
</gene>